<feature type="signal peptide" evidence="4">
    <location>
        <begin position="1"/>
        <end position="27"/>
    </location>
</feature>
<feature type="propeptide" id="PRO_0000405010" evidence="3 4">
    <location>
        <begin position="28"/>
        <end position="39"/>
    </location>
</feature>
<feature type="chain" id="PRO_0000405011" description="Pectate trisaccharide-lyase" evidence="3">
    <location>
        <begin position="40"/>
        <end position="341"/>
    </location>
</feature>
<feature type="repeat" description="PbH1 1" evidence="4">
    <location>
        <begin position="131"/>
        <end position="156"/>
    </location>
</feature>
<feature type="repeat" description="PbH1 2" evidence="4">
    <location>
        <begin position="158"/>
        <end position="186"/>
    </location>
</feature>
<feature type="repeat" description="PbH1 3" evidence="4">
    <location>
        <begin position="262"/>
        <end position="283"/>
    </location>
</feature>
<feature type="repeat" description="PbH1 4" evidence="4">
    <location>
        <begin position="287"/>
        <end position="322"/>
    </location>
</feature>
<feature type="active site" evidence="2">
    <location>
        <position position="233"/>
    </location>
</feature>
<feature type="binding site" evidence="2">
    <location>
        <position position="150"/>
    </location>
    <ligand>
        <name>Ca(2+)</name>
        <dbReference type="ChEBI" id="CHEBI:29108"/>
    </ligand>
</feature>
<feature type="binding site" evidence="2">
    <location>
        <position position="180"/>
    </location>
    <ligand>
        <name>Ca(2+)</name>
        <dbReference type="ChEBI" id="CHEBI:29108"/>
    </ligand>
</feature>
<feature type="binding site" evidence="2">
    <location>
        <position position="184"/>
    </location>
    <ligand>
        <name>Ca(2+)</name>
        <dbReference type="ChEBI" id="CHEBI:29108"/>
    </ligand>
</feature>
<keyword id="KW-0106">Calcium</keyword>
<keyword id="KW-0119">Carbohydrate metabolism</keyword>
<keyword id="KW-0961">Cell wall biogenesis/degradation</keyword>
<keyword id="KW-0456">Lyase</keyword>
<keyword id="KW-0479">Metal-binding</keyword>
<keyword id="KW-0624">Polysaccharide degradation</keyword>
<keyword id="KW-1185">Reference proteome</keyword>
<keyword id="KW-0677">Repeat</keyword>
<keyword id="KW-0964">Secreted</keyword>
<keyword id="KW-0732">Signal</keyword>
<evidence type="ECO:0000250" key="1">
    <source>
        <dbReference type="UniProtKB" id="B1B6T1"/>
    </source>
</evidence>
<evidence type="ECO:0000250" key="2">
    <source>
        <dbReference type="UniProtKB" id="P39116"/>
    </source>
</evidence>
<evidence type="ECO:0000250" key="3">
    <source>
        <dbReference type="UniProtKB" id="Q8GCB2"/>
    </source>
</evidence>
<evidence type="ECO:0000255" key="4"/>
<evidence type="ECO:0000305" key="5"/>
<evidence type="ECO:0000312" key="6">
    <source>
        <dbReference type="EMBL" id="AAU25568.1"/>
    </source>
</evidence>
<evidence type="ECO:0000312" key="7">
    <source>
        <dbReference type="EMBL" id="AAU42942.1"/>
    </source>
</evidence>
<organism>
    <name type="scientific">Bacillus licheniformis (strain ATCC 14580 / DSM 13 / JCM 2505 / CCUG 7422 / NBRC 12200 / NCIMB 9375 / NCTC 10341 / NRRL NRS-1264 / Gibson 46)</name>
    <dbReference type="NCBI Taxonomy" id="279010"/>
    <lineage>
        <taxon>Bacteria</taxon>
        <taxon>Bacillati</taxon>
        <taxon>Bacillota</taxon>
        <taxon>Bacilli</taxon>
        <taxon>Bacillales</taxon>
        <taxon>Bacillaceae</taxon>
        <taxon>Bacillus</taxon>
    </lineage>
</organism>
<protein>
    <recommendedName>
        <fullName evidence="3">Pectate trisaccharide-lyase</fullName>
        <ecNumber>4.2.2.22</ecNumber>
    </recommendedName>
    <alternativeName>
        <fullName evidence="3">Exopolygalacturonate lyase</fullName>
    </alternativeName>
    <alternativeName>
        <fullName evidence="3 6">Pectate lyase</fullName>
    </alternativeName>
</protein>
<comment type="function">
    <text evidence="1 3">Cleaves unsaturated oligo-galacturonides from pectin. The major product is trigalacturonate; digalacturonate and tetragalacturonate are also produced. Activity on methylated pectins decreases with an increasing degree of methylation (By similarity).</text>
</comment>
<comment type="catalytic activity">
    <reaction evidence="3">
        <text>eliminative cleavage of unsaturated trigalacturonate as the major product from the reducing end of polygalacturonic acid/pectate.</text>
        <dbReference type="EC" id="4.2.2.22"/>
    </reaction>
</comment>
<comment type="cofactor">
    <cofactor evidence="3">
        <name>Ca(2+)</name>
        <dbReference type="ChEBI" id="CHEBI:29108"/>
    </cofactor>
</comment>
<comment type="subcellular location">
    <subcellularLocation>
        <location evidence="5">Secreted</location>
    </subcellularLocation>
</comment>
<comment type="similarity">
    <text evidence="4">Belongs to the polysaccharide lyase 1 family.</text>
</comment>
<accession>Q65DC2</accession>
<accession>Q62NU3</accession>
<sequence>MKKLISIIFIFVLGVVGSLTAAVSAEAASALNSGKVNPLADFSLKGFAALNGGTTGGEGGQTVTVTTGDQLIAALKNKNANTPLKIYVNGTITTSNTSASKIDVKDVSNVSIVGSGTKGELKGIGIKIWRANNIIIRNLKIHEVASGDKDAIGIEGPSKNIWVDHNELYHSLNVDKDYYDGLFDVKRDAEYITFSWNYVHDGWKSMLMGSSDSDNYNRTITFHHNWFENLNSRVPSFRFGEGHIYNNYFNKIIDSGINSRMGARIRIENNLFENAKDPIVSWYSSSPGYWHVSNNKFVNSRGSMPTTSTTTYNPPYSYSLDNVDNVKSIVKQNAGVGKINP</sequence>
<dbReference type="EC" id="4.2.2.22"/>
<dbReference type="EMBL" id="CP000002">
    <property type="protein sequence ID" value="AAU25568.1"/>
    <property type="molecule type" value="Genomic_DNA"/>
</dbReference>
<dbReference type="EMBL" id="AE017333">
    <property type="protein sequence ID" value="AAU42942.1"/>
    <property type="molecule type" value="Genomic_DNA"/>
</dbReference>
<dbReference type="RefSeq" id="WP_003186388.1">
    <property type="nucleotide sequence ID" value="NC_006322.1"/>
</dbReference>
<dbReference type="SMR" id="Q65DC2"/>
<dbReference type="STRING" id="279010.BL00947"/>
<dbReference type="CAZy" id="PL1">
    <property type="family name" value="Polysaccharide Lyase Family 1"/>
</dbReference>
<dbReference type="KEGG" id="bld:BLi04129"/>
<dbReference type="KEGG" id="bli:BL00947"/>
<dbReference type="eggNOG" id="COG3866">
    <property type="taxonomic scope" value="Bacteria"/>
</dbReference>
<dbReference type="HOGENOM" id="CLU_021894_2_1_9"/>
<dbReference type="Proteomes" id="UP000000606">
    <property type="component" value="Chromosome"/>
</dbReference>
<dbReference type="GO" id="GO:0005576">
    <property type="term" value="C:extracellular region"/>
    <property type="evidence" value="ECO:0007669"/>
    <property type="project" value="UniProtKB-SubCell"/>
</dbReference>
<dbReference type="GO" id="GO:0046872">
    <property type="term" value="F:metal ion binding"/>
    <property type="evidence" value="ECO:0007669"/>
    <property type="project" value="UniProtKB-KW"/>
</dbReference>
<dbReference type="GO" id="GO:0030570">
    <property type="term" value="F:pectate lyase activity"/>
    <property type="evidence" value="ECO:0007669"/>
    <property type="project" value="InterPro"/>
</dbReference>
<dbReference type="GO" id="GO:0071555">
    <property type="term" value="P:cell wall organization"/>
    <property type="evidence" value="ECO:0007669"/>
    <property type="project" value="UniProtKB-KW"/>
</dbReference>
<dbReference type="GO" id="GO:0000272">
    <property type="term" value="P:polysaccharide catabolic process"/>
    <property type="evidence" value="ECO:0007669"/>
    <property type="project" value="UniProtKB-KW"/>
</dbReference>
<dbReference type="Gene3D" id="2.160.20.10">
    <property type="entry name" value="Single-stranded right-handed beta-helix, Pectin lyase-like"/>
    <property type="match status" value="1"/>
</dbReference>
<dbReference type="InterPro" id="IPR002022">
    <property type="entry name" value="Pec_lyase"/>
</dbReference>
<dbReference type="InterPro" id="IPR012334">
    <property type="entry name" value="Pectin_lyas_fold"/>
</dbReference>
<dbReference type="InterPro" id="IPR011050">
    <property type="entry name" value="Pectin_lyase_fold/virulence"/>
</dbReference>
<dbReference type="InterPro" id="IPR045032">
    <property type="entry name" value="PEL"/>
</dbReference>
<dbReference type="PANTHER" id="PTHR31683">
    <property type="entry name" value="PECTATE LYASE 18-RELATED"/>
    <property type="match status" value="1"/>
</dbReference>
<dbReference type="PANTHER" id="PTHR31683:SF18">
    <property type="entry name" value="PECTATE LYASE 21-RELATED"/>
    <property type="match status" value="1"/>
</dbReference>
<dbReference type="Pfam" id="PF00544">
    <property type="entry name" value="Pectate_lyase_4"/>
    <property type="match status" value="1"/>
</dbReference>
<dbReference type="SMART" id="SM00656">
    <property type="entry name" value="Amb_all"/>
    <property type="match status" value="1"/>
</dbReference>
<dbReference type="SUPFAM" id="SSF51126">
    <property type="entry name" value="Pectin lyase-like"/>
    <property type="match status" value="1"/>
</dbReference>
<proteinExistence type="inferred from homology"/>
<name>PTLY_BACLD</name>
<reference evidence="6" key="1">
    <citation type="journal article" date="2004" name="Genome Biol.">
        <title>Complete genome sequence of the industrial bacterium Bacillus licheniformis and comparisons with closely related Bacillus species.</title>
        <authorList>
            <person name="Rey M.W."/>
            <person name="Ramaiya P."/>
            <person name="Nelson B.A."/>
            <person name="Brody-Karpin S.D."/>
            <person name="Zaretsky E.J."/>
            <person name="Tang M."/>
            <person name="Lopez de Leon A."/>
            <person name="Xiang H."/>
            <person name="Gusti V."/>
            <person name="Clausen I.G."/>
            <person name="Olsen P.B."/>
            <person name="Rasmussen M.D."/>
            <person name="Andersen J.T."/>
            <person name="Joergensen P.L."/>
            <person name="Larsen T.S."/>
            <person name="Sorokin A."/>
            <person name="Bolotin A."/>
            <person name="Lapidus A."/>
            <person name="Galleron N."/>
            <person name="Ehrlich S.D."/>
            <person name="Berka R.M."/>
        </authorList>
    </citation>
    <scope>NUCLEOTIDE SEQUENCE [LARGE SCALE GENOMIC DNA]</scope>
    <source>
        <strain>ATCC 14580 / DSM 13 / JCM 2505 / CCUG 7422 / NBRC 12200 / NCIMB 9375 / NCTC 10341 / NRRL NRS-1264 / Gibson 46</strain>
    </source>
</reference>
<reference evidence="7" key="2">
    <citation type="journal article" date="2004" name="J. Mol. Microbiol. Biotechnol.">
        <title>The complete genome sequence of Bacillus licheniformis DSM13, an organism with great industrial potential.</title>
        <authorList>
            <person name="Veith B."/>
            <person name="Herzberg C."/>
            <person name="Steckel S."/>
            <person name="Feesche J."/>
            <person name="Maurer K.H."/>
            <person name="Ehrenreich P."/>
            <person name="Baeumer S."/>
            <person name="Henne A."/>
            <person name="Liesegang H."/>
            <person name="Merkl R."/>
            <person name="Ehrenreich A."/>
            <person name="Gottschalk G."/>
        </authorList>
    </citation>
    <scope>NUCLEOTIDE SEQUENCE [LARGE SCALE GENOMIC DNA]</scope>
    <source>
        <strain>ATCC 14580 / DSM 13 / JCM 2505 / CCUG 7422 / NBRC 12200 / NCIMB 9375 / NCTC 10341 / NRRL NRS-1264 / Gibson 46</strain>
    </source>
</reference>
<gene>
    <name type="ordered locus">BLi04129</name>
    <name type="ordered locus">BL00947</name>
</gene>